<keyword id="KW-0325">Glycoprotein</keyword>
<keyword id="KW-0472">Membrane</keyword>
<keyword id="KW-1185">Reference proteome</keyword>
<keyword id="KW-0732">Signal</keyword>
<keyword id="KW-0812">Transmembrane</keyword>
<keyword id="KW-1133">Transmembrane helix</keyword>
<organism>
    <name type="scientific">Bos taurus</name>
    <name type="common">Bovine</name>
    <dbReference type="NCBI Taxonomy" id="9913"/>
    <lineage>
        <taxon>Eukaryota</taxon>
        <taxon>Metazoa</taxon>
        <taxon>Chordata</taxon>
        <taxon>Craniata</taxon>
        <taxon>Vertebrata</taxon>
        <taxon>Euteleostomi</taxon>
        <taxon>Mammalia</taxon>
        <taxon>Eutheria</taxon>
        <taxon>Laurasiatheria</taxon>
        <taxon>Artiodactyla</taxon>
        <taxon>Ruminantia</taxon>
        <taxon>Pecora</taxon>
        <taxon>Bovidae</taxon>
        <taxon>Bovinae</taxon>
        <taxon>Bos</taxon>
    </lineage>
</organism>
<accession>Q2YDJ5</accession>
<comment type="subcellular location">
    <subcellularLocation>
        <location evidence="3">Membrane</location>
        <topology evidence="3">Single-pass type I membrane protein</topology>
    </subcellularLocation>
</comment>
<feature type="signal peptide" evidence="1">
    <location>
        <begin position="1"/>
        <end position="17"/>
    </location>
</feature>
<feature type="chain" id="PRO_0000348433" description="Uncharacterized protein CXorf66 homolog">
    <location>
        <begin position="18"/>
        <end position="361"/>
    </location>
</feature>
<feature type="topological domain" description="Extracellular" evidence="1">
    <location>
        <begin position="18"/>
        <end position="47"/>
    </location>
</feature>
<feature type="transmembrane region" description="Helical" evidence="1">
    <location>
        <begin position="48"/>
        <end position="68"/>
    </location>
</feature>
<feature type="topological domain" description="Cytoplasmic" evidence="1">
    <location>
        <begin position="69"/>
        <end position="361"/>
    </location>
</feature>
<feature type="region of interest" description="Disordered" evidence="2">
    <location>
        <begin position="95"/>
        <end position="197"/>
    </location>
</feature>
<feature type="compositionally biased region" description="Polar residues" evidence="2">
    <location>
        <begin position="95"/>
        <end position="106"/>
    </location>
</feature>
<feature type="compositionally biased region" description="Low complexity" evidence="2">
    <location>
        <begin position="144"/>
        <end position="158"/>
    </location>
</feature>
<feature type="compositionally biased region" description="Basic residues" evidence="2">
    <location>
        <begin position="169"/>
        <end position="185"/>
    </location>
</feature>
<feature type="glycosylation site" description="N-linked (GlcNAc...) asparagine" evidence="1">
    <location>
        <position position="24"/>
    </location>
</feature>
<protein>
    <recommendedName>
        <fullName>Uncharacterized protein CXorf66 homolog</fullName>
    </recommendedName>
</protein>
<reference key="1">
    <citation type="submission" date="2005-11" db="EMBL/GenBank/DDBJ databases">
        <authorList>
            <consortium name="NIH - Mammalian Gene Collection (MGC) project"/>
        </authorList>
    </citation>
    <scope>NUCLEOTIDE SEQUENCE [LARGE SCALE MRNA]</scope>
    <source>
        <strain>Crossbred X Angus</strain>
        <tissue>Liver</tissue>
    </source>
</reference>
<evidence type="ECO:0000255" key="1"/>
<evidence type="ECO:0000256" key="2">
    <source>
        <dbReference type="SAM" id="MobiDB-lite"/>
    </source>
</evidence>
<evidence type="ECO:0000305" key="3"/>
<sequence length="361" mass="40637">MNLFIYVLLLSIWTSSCLDRNESNGSATAVTTHAEFKQTKLQELRRRLLIIVIGTLITGYMVSCTCLLHYSCDSEEAHTAAKDKKEDITIKASRSSKISFTDSKSPTAGLGDPERQSVVSRIDKSSGPSSPRKVPSSAEKLVRPSSQKKPSKPSAPKKVLGSPPQEKLHRTRSPKKAHRQAHAHKPVSQVSPSYPEKAIKSTWPPSLQCRAKPTKTPLPYPKNQSFPEQSSVDKLTKRQRYLKLKCPASAGRAEILSRPHPVKFCRCYKEKCLVCRAVSEPFITHVSDANKKHVPVPLFSRELKHFYKSYKKKQPKYNTLYGNMSDSDITTYNSDGESDREVIIMCNIKCKEDIYKNSRNN</sequence>
<dbReference type="EMBL" id="BC110192">
    <property type="protein sequence ID" value="AAI10193.1"/>
    <property type="molecule type" value="mRNA"/>
</dbReference>
<dbReference type="RefSeq" id="NP_001193729.1">
    <property type="nucleotide sequence ID" value="NM_001206800.1"/>
</dbReference>
<dbReference type="SMR" id="Q2YDJ5"/>
<dbReference type="FunCoup" id="Q2YDJ5">
    <property type="interactions" value="2"/>
</dbReference>
<dbReference type="STRING" id="9913.ENSBTAP00000047306"/>
<dbReference type="GlyGen" id="Q2YDJ5">
    <property type="glycosylation" value="1 site"/>
</dbReference>
<dbReference type="PaxDb" id="9913-ENSBTAP00000047306"/>
<dbReference type="Ensembl" id="ENSBTAT00000050635.4">
    <property type="protein sequence ID" value="ENSBTAP00000047306.3"/>
    <property type="gene ID" value="ENSBTAG00000036144.4"/>
</dbReference>
<dbReference type="Ensembl" id="ENSBTAT00000079795.1">
    <property type="protein sequence ID" value="ENSBTAP00000069066.1"/>
    <property type="gene ID" value="ENSBTAG00000056779.1"/>
</dbReference>
<dbReference type="GeneID" id="767881"/>
<dbReference type="KEGG" id="bta:767881"/>
<dbReference type="CTD" id="688842"/>
<dbReference type="VEuPathDB" id="HostDB:ENSBTAG00000036144"/>
<dbReference type="VEuPathDB" id="HostDB:ENSBTAG00000049080"/>
<dbReference type="eggNOG" id="ENOG502T3E1">
    <property type="taxonomic scope" value="Eukaryota"/>
</dbReference>
<dbReference type="GeneTree" id="ENSGT00390000004226"/>
<dbReference type="InParanoid" id="Q2YDJ5"/>
<dbReference type="OMA" id="KYYSEVD"/>
<dbReference type="OrthoDB" id="9837811at2759"/>
<dbReference type="Proteomes" id="UP000009136">
    <property type="component" value="Chromosome X"/>
</dbReference>
<dbReference type="Proteomes" id="UP000009136">
    <property type="component" value="Unassembled WGS sequence"/>
</dbReference>
<dbReference type="Bgee" id="ENSBTAG00000049080">
    <property type="expression patterns" value="Expressed in spermatid and 4 other cell types or tissues"/>
</dbReference>
<dbReference type="GO" id="GO:0016020">
    <property type="term" value="C:membrane"/>
    <property type="evidence" value="ECO:0007669"/>
    <property type="project" value="UniProtKB-SubCell"/>
</dbReference>
<dbReference type="InterPro" id="IPR038873">
    <property type="entry name" value="CXorf66"/>
</dbReference>
<dbReference type="PANTHER" id="PTHR37340">
    <property type="entry name" value="GENE 7073-RELATED"/>
    <property type="match status" value="1"/>
</dbReference>
<dbReference type="PANTHER" id="PTHR37340:SF1">
    <property type="entry name" value="GENE 7073-RELATED"/>
    <property type="match status" value="1"/>
</dbReference>
<name>CX066_BOVIN</name>
<proteinExistence type="evidence at transcript level"/>